<evidence type="ECO:0000255" key="1">
    <source>
        <dbReference type="HAMAP-Rule" id="MF_00405"/>
    </source>
</evidence>
<keyword id="KW-0963">Cytoplasm</keyword>
<keyword id="KW-0275">Fatty acid biosynthesis</keyword>
<keyword id="KW-0276">Fatty acid metabolism</keyword>
<keyword id="KW-0413">Isomerase</keyword>
<keyword id="KW-0444">Lipid biosynthesis</keyword>
<keyword id="KW-0443">Lipid metabolism</keyword>
<keyword id="KW-0456">Lyase</keyword>
<gene>
    <name evidence="1" type="primary">fabA</name>
    <name type="ordered locus">RPE_0257</name>
</gene>
<accession>Q07V18</accession>
<proteinExistence type="inferred from homology"/>
<dbReference type="EC" id="4.2.1.59" evidence="1"/>
<dbReference type="EC" id="5.3.3.14" evidence="1"/>
<dbReference type="EMBL" id="CP000463">
    <property type="protein sequence ID" value="ABJ04216.1"/>
    <property type="molecule type" value="Genomic_DNA"/>
</dbReference>
<dbReference type="SMR" id="Q07V18"/>
<dbReference type="STRING" id="316055.RPE_0257"/>
<dbReference type="KEGG" id="rpe:RPE_0257"/>
<dbReference type="eggNOG" id="COG0764">
    <property type="taxonomic scope" value="Bacteria"/>
</dbReference>
<dbReference type="HOGENOM" id="CLU_097925_0_0_5"/>
<dbReference type="OrthoDB" id="9786735at2"/>
<dbReference type="UniPathway" id="UPA00094"/>
<dbReference type="GO" id="GO:0005737">
    <property type="term" value="C:cytoplasm"/>
    <property type="evidence" value="ECO:0007669"/>
    <property type="project" value="UniProtKB-SubCell"/>
</dbReference>
<dbReference type="GO" id="GO:0019171">
    <property type="term" value="F:(3R)-hydroxyacyl-[acyl-carrier-protein] dehydratase activity"/>
    <property type="evidence" value="ECO:0007669"/>
    <property type="project" value="UniProtKB-UniRule"/>
</dbReference>
<dbReference type="GO" id="GO:0034017">
    <property type="term" value="F:trans-2-decenoyl-acyl-carrier-protein isomerase activity"/>
    <property type="evidence" value="ECO:0007669"/>
    <property type="project" value="UniProtKB-UniRule"/>
</dbReference>
<dbReference type="GO" id="GO:0006636">
    <property type="term" value="P:unsaturated fatty acid biosynthetic process"/>
    <property type="evidence" value="ECO:0007669"/>
    <property type="project" value="UniProtKB-UniRule"/>
</dbReference>
<dbReference type="CDD" id="cd01287">
    <property type="entry name" value="FabA"/>
    <property type="match status" value="1"/>
</dbReference>
<dbReference type="Gene3D" id="3.10.129.10">
    <property type="entry name" value="Hotdog Thioesterase"/>
    <property type="match status" value="1"/>
</dbReference>
<dbReference type="HAMAP" id="MF_00405">
    <property type="entry name" value="FabA"/>
    <property type="match status" value="1"/>
</dbReference>
<dbReference type="InterPro" id="IPR010083">
    <property type="entry name" value="FabA"/>
</dbReference>
<dbReference type="InterPro" id="IPR013114">
    <property type="entry name" value="FabA_FabZ"/>
</dbReference>
<dbReference type="InterPro" id="IPR029069">
    <property type="entry name" value="HotDog_dom_sf"/>
</dbReference>
<dbReference type="NCBIfam" id="TIGR01749">
    <property type="entry name" value="fabA"/>
    <property type="match status" value="1"/>
</dbReference>
<dbReference type="NCBIfam" id="NF003509">
    <property type="entry name" value="PRK05174.1"/>
    <property type="match status" value="1"/>
</dbReference>
<dbReference type="PANTHER" id="PTHR30272">
    <property type="entry name" value="3-HYDROXYACYL-[ACYL-CARRIER-PROTEIN] DEHYDRATASE"/>
    <property type="match status" value="1"/>
</dbReference>
<dbReference type="PANTHER" id="PTHR30272:SF8">
    <property type="entry name" value="3-HYDROXYDECANOYL-[ACYL-CARRIER-PROTEIN] DEHYDRATASE"/>
    <property type="match status" value="1"/>
</dbReference>
<dbReference type="Pfam" id="PF07977">
    <property type="entry name" value="FabA"/>
    <property type="match status" value="1"/>
</dbReference>
<dbReference type="SUPFAM" id="SSF54637">
    <property type="entry name" value="Thioesterase/thiol ester dehydrase-isomerase"/>
    <property type="match status" value="1"/>
</dbReference>
<protein>
    <recommendedName>
        <fullName evidence="1">3-hydroxydecanoyl-[acyl-carrier-protein] dehydratase</fullName>
        <ecNumber evidence="1">4.2.1.59</ecNumber>
    </recommendedName>
    <alternativeName>
        <fullName evidence="1">3-hydroxyacyl-[acyl-carrier-protein] dehydratase FabA</fullName>
    </alternativeName>
    <alternativeName>
        <fullName evidence="1">Beta-hydroxydecanoyl thioester dehydrase</fullName>
    </alternativeName>
    <alternativeName>
        <fullName evidence="1">Trans-2-decenoyl-[acyl-carrier-protein] isomerase</fullName>
        <ecNumber evidence="1">5.3.3.14</ecNumber>
    </alternativeName>
</protein>
<reference key="1">
    <citation type="submission" date="2006-09" db="EMBL/GenBank/DDBJ databases">
        <title>Complete sequence of Rhodopseudomonas palustris BisA53.</title>
        <authorList>
            <consortium name="US DOE Joint Genome Institute"/>
            <person name="Copeland A."/>
            <person name="Lucas S."/>
            <person name="Lapidus A."/>
            <person name="Barry K."/>
            <person name="Detter J.C."/>
            <person name="Glavina del Rio T."/>
            <person name="Hammon N."/>
            <person name="Israni S."/>
            <person name="Dalin E."/>
            <person name="Tice H."/>
            <person name="Pitluck S."/>
            <person name="Chain P."/>
            <person name="Malfatti S."/>
            <person name="Shin M."/>
            <person name="Vergez L."/>
            <person name="Schmutz J."/>
            <person name="Larimer F."/>
            <person name="Land M."/>
            <person name="Hauser L."/>
            <person name="Pelletier D.A."/>
            <person name="Kyrpides N."/>
            <person name="Kim E."/>
            <person name="Harwood C.S."/>
            <person name="Oda Y."/>
            <person name="Richardson P."/>
        </authorList>
    </citation>
    <scope>NUCLEOTIDE SEQUENCE [LARGE SCALE GENOMIC DNA]</scope>
    <source>
        <strain>BisA53</strain>
    </source>
</reference>
<organism>
    <name type="scientific">Rhodopseudomonas palustris (strain BisA53)</name>
    <dbReference type="NCBI Taxonomy" id="316055"/>
    <lineage>
        <taxon>Bacteria</taxon>
        <taxon>Pseudomonadati</taxon>
        <taxon>Pseudomonadota</taxon>
        <taxon>Alphaproteobacteria</taxon>
        <taxon>Hyphomicrobiales</taxon>
        <taxon>Nitrobacteraceae</taxon>
        <taxon>Rhodopseudomonas</taxon>
    </lineage>
</organism>
<feature type="chain" id="PRO_0000301875" description="3-hydroxydecanoyl-[acyl-carrier-protein] dehydratase">
    <location>
        <begin position="1"/>
        <end position="176"/>
    </location>
</feature>
<feature type="active site" evidence="1">
    <location>
        <position position="71"/>
    </location>
</feature>
<comment type="function">
    <text evidence="1">Necessary for the introduction of cis unsaturation into fatty acids. Catalyzes the dehydration of (3R)-3-hydroxydecanoyl-ACP to E-(2)-decenoyl-ACP and then its isomerization to Z-(3)-decenoyl-ACP. Can catalyze the dehydratase reaction for beta-hydroxyacyl-ACPs with saturated chain lengths up to 16:0, being most active on intermediate chain length.</text>
</comment>
<comment type="catalytic activity">
    <reaction evidence="1">
        <text>a (3R)-hydroxyacyl-[ACP] = a (2E)-enoyl-[ACP] + H2O</text>
        <dbReference type="Rhea" id="RHEA:13097"/>
        <dbReference type="Rhea" id="RHEA-COMP:9925"/>
        <dbReference type="Rhea" id="RHEA-COMP:9945"/>
        <dbReference type="ChEBI" id="CHEBI:15377"/>
        <dbReference type="ChEBI" id="CHEBI:78784"/>
        <dbReference type="ChEBI" id="CHEBI:78827"/>
        <dbReference type="EC" id="4.2.1.59"/>
    </reaction>
</comment>
<comment type="catalytic activity">
    <reaction evidence="1">
        <text>(3R)-hydroxydecanoyl-[ACP] = (2E)-decenoyl-[ACP] + H2O</text>
        <dbReference type="Rhea" id="RHEA:41860"/>
        <dbReference type="Rhea" id="RHEA-COMP:9638"/>
        <dbReference type="Rhea" id="RHEA-COMP:9639"/>
        <dbReference type="ChEBI" id="CHEBI:15377"/>
        <dbReference type="ChEBI" id="CHEBI:78466"/>
        <dbReference type="ChEBI" id="CHEBI:78467"/>
    </reaction>
</comment>
<comment type="catalytic activity">
    <reaction evidence="1">
        <text>(2E)-decenoyl-[ACP] = (3Z)-decenoyl-[ACP]</text>
        <dbReference type="Rhea" id="RHEA:23568"/>
        <dbReference type="Rhea" id="RHEA-COMP:9639"/>
        <dbReference type="Rhea" id="RHEA-COMP:9927"/>
        <dbReference type="ChEBI" id="CHEBI:78467"/>
        <dbReference type="ChEBI" id="CHEBI:78798"/>
        <dbReference type="EC" id="5.3.3.14"/>
    </reaction>
</comment>
<comment type="pathway">
    <text evidence="1">Lipid metabolism; fatty acid biosynthesis.</text>
</comment>
<comment type="subunit">
    <text evidence="1">Homodimer.</text>
</comment>
<comment type="subcellular location">
    <subcellularLocation>
        <location evidence="1">Cytoplasm</location>
    </subcellularLocation>
</comment>
<comment type="similarity">
    <text evidence="1">Belongs to the thioester dehydratase family. FabA subfamily.</text>
</comment>
<sequence length="176" mass="19368">MQDRRSSYDYEDLLACGRGEMFGPGNAQLPLPPMLMFNRITEINDNGGEYGKGLIRAELDVTSDLWFFGCHFKGDPVMPGCLGLDAMWQMVGFFLGWTGGEGRGRALGLGELKFTGQVLPDIRKVVYNIDVKRVMRSKLVLGIADGWLSADDTIIYRAKELKVGLFKQDAAVPAGG</sequence>
<name>FABA_RHOP5</name>